<accession>Q8Z227</accession>
<accession>Q83ST6</accession>
<sequence length="901" mass="103105">MLIPSKLSRPVRLDHTVVRERLLAKLSGANNFRLLLVTSPAGYGKTTLVSQWAAGKNELGWYSLDEGDNQQERFASYLIAAIQQATGGHCSTSEAMAQKRQYASLTSLFAQLFIELAQWHRPLYLVIDDYHLITNPVIHDAMRFFLRHQPENFTLVVLSRNLPQLGIANLRVRDQLLEIGSQQLAFNHQEAKQFFDRRLSSPIEAAESSRMCDDVAGWATALQLIALSARQNHTSAHHSARRLAGINASHLSDYLVDEVLDNVDVSTRHFLLKSAILRSMNDALIVRVTGEENGQMRLEEIERQGLFLQRMDDTGEWFSYHPLFGSFLRQRCQWELAAELPEIHRAAAESWMEQGFPSEAIHHALAAGDAQMLRDILLNHAWGLFNHSELALLEESLKALPWESLLENPRLVLLQAWLMQSQHRYSEVNTLLARAEQEIKGVMDGTLHAEFNALRAQVAINDGNPEEAERLAKLALDELPLAWFYSRIVATSVHGEVLHCKGNLSQSLSLMQQTEQMARHHDVWHYALWSLIQQSEIQFAQGFLQAAWETQERAFQLIKEQHLEQLPMHEFLVRIRAQLLWAWARLDEAEASARSGIAVLSTFQPQQQLQCLTLLVQCSLARGDLDNARSQLNRLEKLLGNGRYHCDWISNADKVRVIYWQLTGDKKSAANWLRHTPKPAFANNHFLQGQWRNIARAQILLGEFEPAEIVLEELNENARSLRLMSDLNRNLLLLNQLYWQSGRKNDAQRVLLDALQLANRTGFISHFVIEGEAMAQQLRQLIQLNTLPEMEQHRAQRILRYINQHHRHKFAHFDEGFVERLLNHPDVPELIRTSPLTQREWQVLGLIYSGYSNEQIAGELAVAATTIKTHIRNLYQKLGVAHRQDAVQHAQQLLKMMGYGV</sequence>
<proteinExistence type="inferred from homology"/>
<gene>
    <name evidence="1" type="primary">malT</name>
    <name type="ordered locus">STY4281</name>
    <name type="ordered locus">t3991</name>
</gene>
<dbReference type="EMBL" id="AL513382">
    <property type="protein sequence ID" value="CAD08099.1"/>
    <property type="molecule type" value="Genomic_DNA"/>
</dbReference>
<dbReference type="EMBL" id="AE014613">
    <property type="protein sequence ID" value="AAO71461.1"/>
    <property type="molecule type" value="Genomic_DNA"/>
</dbReference>
<dbReference type="RefSeq" id="NP_458389.1">
    <property type="nucleotide sequence ID" value="NC_003198.1"/>
</dbReference>
<dbReference type="RefSeq" id="WP_000907046.1">
    <property type="nucleotide sequence ID" value="NZ_WSUR01000001.1"/>
</dbReference>
<dbReference type="SMR" id="Q8Z227"/>
<dbReference type="STRING" id="220341.gene:17588112"/>
<dbReference type="KEGG" id="stt:t3991"/>
<dbReference type="KEGG" id="sty:STY4281"/>
<dbReference type="PATRIC" id="fig|220341.7.peg.4375"/>
<dbReference type="eggNOG" id="COG2909">
    <property type="taxonomic scope" value="Bacteria"/>
</dbReference>
<dbReference type="HOGENOM" id="CLU_006325_3_0_6"/>
<dbReference type="OMA" id="SDWVSNA"/>
<dbReference type="Proteomes" id="UP000000541">
    <property type="component" value="Chromosome"/>
</dbReference>
<dbReference type="Proteomes" id="UP000002670">
    <property type="component" value="Chromosome"/>
</dbReference>
<dbReference type="GO" id="GO:0005524">
    <property type="term" value="F:ATP binding"/>
    <property type="evidence" value="ECO:0007669"/>
    <property type="project" value="UniProtKB-UniRule"/>
</dbReference>
<dbReference type="GO" id="GO:0003677">
    <property type="term" value="F:DNA binding"/>
    <property type="evidence" value="ECO:0007669"/>
    <property type="project" value="UniProtKB-KW"/>
</dbReference>
<dbReference type="GO" id="GO:0003700">
    <property type="term" value="F:DNA-binding transcription factor activity"/>
    <property type="evidence" value="ECO:0007669"/>
    <property type="project" value="UniProtKB-UniRule"/>
</dbReference>
<dbReference type="GO" id="GO:0045913">
    <property type="term" value="P:positive regulation of carbohydrate metabolic process"/>
    <property type="evidence" value="ECO:0007669"/>
    <property type="project" value="UniProtKB-UniRule"/>
</dbReference>
<dbReference type="GO" id="GO:0045893">
    <property type="term" value="P:positive regulation of DNA-templated transcription"/>
    <property type="evidence" value="ECO:0007669"/>
    <property type="project" value="UniProtKB-UniRule"/>
</dbReference>
<dbReference type="CDD" id="cd06170">
    <property type="entry name" value="LuxR_C_like"/>
    <property type="match status" value="1"/>
</dbReference>
<dbReference type="FunFam" id="1.10.10.10:FF:000115">
    <property type="entry name" value="HTH-type transcriptional regulator MalT"/>
    <property type="match status" value="1"/>
</dbReference>
<dbReference type="Gene3D" id="3.40.50.300">
    <property type="entry name" value="P-loop containing nucleotide triphosphate hydrolases"/>
    <property type="match status" value="1"/>
</dbReference>
<dbReference type="Gene3D" id="1.25.40.10">
    <property type="entry name" value="Tetratricopeptide repeat domain"/>
    <property type="match status" value="1"/>
</dbReference>
<dbReference type="Gene3D" id="1.10.10.10">
    <property type="entry name" value="Winged helix-like DNA-binding domain superfamily/Winged helix DNA-binding domain"/>
    <property type="match status" value="1"/>
</dbReference>
<dbReference type="HAMAP" id="MF_01247">
    <property type="entry name" value="HTH_type_MalT"/>
    <property type="match status" value="1"/>
</dbReference>
<dbReference type="InterPro" id="IPR027417">
    <property type="entry name" value="P-loop_NTPase"/>
</dbReference>
<dbReference type="InterPro" id="IPR016032">
    <property type="entry name" value="Sig_transdc_resp-reg_C-effctor"/>
</dbReference>
<dbReference type="InterPro" id="IPR011990">
    <property type="entry name" value="TPR-like_helical_dom_sf"/>
</dbReference>
<dbReference type="InterPro" id="IPR041617">
    <property type="entry name" value="TPR_MalT"/>
</dbReference>
<dbReference type="InterPro" id="IPR023768">
    <property type="entry name" value="Tscrpt_reg_HTH_MalT"/>
</dbReference>
<dbReference type="InterPro" id="IPR000792">
    <property type="entry name" value="Tscrpt_reg_LuxR_C"/>
</dbReference>
<dbReference type="InterPro" id="IPR036388">
    <property type="entry name" value="WH-like_DNA-bd_sf"/>
</dbReference>
<dbReference type="NCBIfam" id="NF003420">
    <property type="entry name" value="PRK04841.1"/>
    <property type="match status" value="1"/>
</dbReference>
<dbReference type="PANTHER" id="PTHR44688">
    <property type="entry name" value="DNA-BINDING TRANSCRIPTIONAL ACTIVATOR DEVR_DOSR"/>
    <property type="match status" value="1"/>
</dbReference>
<dbReference type="PANTHER" id="PTHR44688:SF16">
    <property type="entry name" value="DNA-BINDING TRANSCRIPTIONAL ACTIVATOR DEVR_DOSR"/>
    <property type="match status" value="1"/>
</dbReference>
<dbReference type="Pfam" id="PF00196">
    <property type="entry name" value="GerE"/>
    <property type="match status" value="1"/>
</dbReference>
<dbReference type="Pfam" id="PF17874">
    <property type="entry name" value="TPR_MalT"/>
    <property type="match status" value="1"/>
</dbReference>
<dbReference type="PRINTS" id="PR00038">
    <property type="entry name" value="HTHLUXR"/>
</dbReference>
<dbReference type="SMART" id="SM00421">
    <property type="entry name" value="HTH_LUXR"/>
    <property type="match status" value="1"/>
</dbReference>
<dbReference type="SUPFAM" id="SSF46894">
    <property type="entry name" value="C-terminal effector domain of the bipartite response regulators"/>
    <property type="match status" value="1"/>
</dbReference>
<dbReference type="SUPFAM" id="SSF52540">
    <property type="entry name" value="P-loop containing nucleoside triphosphate hydrolases"/>
    <property type="match status" value="1"/>
</dbReference>
<dbReference type="SUPFAM" id="SSF48452">
    <property type="entry name" value="TPR-like"/>
    <property type="match status" value="1"/>
</dbReference>
<dbReference type="PROSITE" id="PS00622">
    <property type="entry name" value="HTH_LUXR_1"/>
    <property type="match status" value="1"/>
</dbReference>
<dbReference type="PROSITE" id="PS50043">
    <property type="entry name" value="HTH_LUXR_2"/>
    <property type="match status" value="1"/>
</dbReference>
<keyword id="KW-0010">Activator</keyword>
<keyword id="KW-0067">ATP-binding</keyword>
<keyword id="KW-0119">Carbohydrate metabolism</keyword>
<keyword id="KW-0238">DNA-binding</keyword>
<keyword id="KW-0547">Nucleotide-binding</keyword>
<keyword id="KW-0804">Transcription</keyword>
<keyword id="KW-0805">Transcription regulation</keyword>
<protein>
    <recommendedName>
        <fullName evidence="1">HTH-type transcriptional regulator MalT</fullName>
    </recommendedName>
    <alternativeName>
        <fullName evidence="1">ATP-dependent transcriptional activator MalT</fullName>
    </alternativeName>
</protein>
<comment type="function">
    <text evidence="1">Positively regulates the transcription of the maltose regulon whose gene products are responsible for uptake and catabolism of malto-oligosaccharides. Specifically binds to the promoter region of its target genes, recognizing a short DNA motif called the MalT box.</text>
</comment>
<comment type="activity regulation">
    <text evidence="1">Activated by ATP and maltotriose, which are both required for DNA binding.</text>
</comment>
<comment type="subunit">
    <text evidence="1">Monomer in solution. Oligomerizes to an active state in the presence of the positive effectors ATP and maltotriose.</text>
</comment>
<comment type="similarity">
    <text evidence="1">Belongs to the MalT family.</text>
</comment>
<name>MALT_SALTI</name>
<feature type="chain" id="PRO_0000184167" description="HTH-type transcriptional regulator MalT">
    <location>
        <begin position="1"/>
        <end position="901"/>
    </location>
</feature>
<feature type="domain" description="HTH luxR-type" evidence="1">
    <location>
        <begin position="829"/>
        <end position="894"/>
    </location>
</feature>
<feature type="DNA-binding region" description="H-T-H motif" evidence="1">
    <location>
        <begin position="853"/>
        <end position="872"/>
    </location>
</feature>
<feature type="binding site" evidence="1">
    <location>
        <begin position="39"/>
        <end position="46"/>
    </location>
    <ligand>
        <name>ATP</name>
        <dbReference type="ChEBI" id="CHEBI:30616"/>
    </ligand>
</feature>
<feature type="sequence conflict" description="In Ref. 2; AAO71461." evidence="2" ref="2">
    <original>G</original>
    <variation>S</variation>
    <location>
        <position position="67"/>
    </location>
</feature>
<reference key="1">
    <citation type="journal article" date="2001" name="Nature">
        <title>Complete genome sequence of a multiple drug resistant Salmonella enterica serovar Typhi CT18.</title>
        <authorList>
            <person name="Parkhill J."/>
            <person name="Dougan G."/>
            <person name="James K.D."/>
            <person name="Thomson N.R."/>
            <person name="Pickard D."/>
            <person name="Wain J."/>
            <person name="Churcher C.M."/>
            <person name="Mungall K.L."/>
            <person name="Bentley S.D."/>
            <person name="Holden M.T.G."/>
            <person name="Sebaihia M."/>
            <person name="Baker S."/>
            <person name="Basham D."/>
            <person name="Brooks K."/>
            <person name="Chillingworth T."/>
            <person name="Connerton P."/>
            <person name="Cronin A."/>
            <person name="Davis P."/>
            <person name="Davies R.M."/>
            <person name="Dowd L."/>
            <person name="White N."/>
            <person name="Farrar J."/>
            <person name="Feltwell T."/>
            <person name="Hamlin N."/>
            <person name="Haque A."/>
            <person name="Hien T.T."/>
            <person name="Holroyd S."/>
            <person name="Jagels K."/>
            <person name="Krogh A."/>
            <person name="Larsen T.S."/>
            <person name="Leather S."/>
            <person name="Moule S."/>
            <person name="O'Gaora P."/>
            <person name="Parry C."/>
            <person name="Quail M.A."/>
            <person name="Rutherford K.M."/>
            <person name="Simmonds M."/>
            <person name="Skelton J."/>
            <person name="Stevens K."/>
            <person name="Whitehead S."/>
            <person name="Barrell B.G."/>
        </authorList>
    </citation>
    <scope>NUCLEOTIDE SEQUENCE [LARGE SCALE GENOMIC DNA]</scope>
    <source>
        <strain>CT18</strain>
    </source>
</reference>
<reference key="2">
    <citation type="journal article" date="2003" name="J. Bacteriol.">
        <title>Comparative genomics of Salmonella enterica serovar Typhi strains Ty2 and CT18.</title>
        <authorList>
            <person name="Deng W."/>
            <person name="Liou S.-R."/>
            <person name="Plunkett G. III"/>
            <person name="Mayhew G.F."/>
            <person name="Rose D.J."/>
            <person name="Burland V."/>
            <person name="Kodoyianni V."/>
            <person name="Schwartz D.C."/>
            <person name="Blattner F.R."/>
        </authorList>
    </citation>
    <scope>NUCLEOTIDE SEQUENCE [LARGE SCALE GENOMIC DNA]</scope>
    <source>
        <strain>ATCC 700931 / Ty2</strain>
    </source>
</reference>
<evidence type="ECO:0000255" key="1">
    <source>
        <dbReference type="HAMAP-Rule" id="MF_01247"/>
    </source>
</evidence>
<evidence type="ECO:0000305" key="2"/>
<organism>
    <name type="scientific">Salmonella typhi</name>
    <dbReference type="NCBI Taxonomy" id="90370"/>
    <lineage>
        <taxon>Bacteria</taxon>
        <taxon>Pseudomonadati</taxon>
        <taxon>Pseudomonadota</taxon>
        <taxon>Gammaproteobacteria</taxon>
        <taxon>Enterobacterales</taxon>
        <taxon>Enterobacteriaceae</taxon>
        <taxon>Salmonella</taxon>
    </lineage>
</organism>